<accession>C0HLA8</accession>
<evidence type="ECO:0000250" key="1">
    <source>
        <dbReference type="UniProtKB" id="A0A1Z0YU59"/>
    </source>
</evidence>
<evidence type="ECO:0000255" key="2">
    <source>
        <dbReference type="PROSITE-ProRule" id="PRU00031"/>
    </source>
</evidence>
<evidence type="ECO:0000269" key="3">
    <source>
    </source>
</evidence>
<evidence type="ECO:0000303" key="4">
    <source>
    </source>
</evidence>
<evidence type="ECO:0000305" key="5"/>
<evidence type="ECO:0000305" key="6">
    <source>
    </source>
</evidence>
<proteinExistence type="evidence at protein level"/>
<dbReference type="SMR" id="C0HLA8"/>
<dbReference type="GO" id="GO:0005615">
    <property type="term" value="C:extracellular space"/>
    <property type="evidence" value="ECO:0007669"/>
    <property type="project" value="TreeGrafter"/>
</dbReference>
<dbReference type="GO" id="GO:0004867">
    <property type="term" value="F:serine-type endopeptidase inhibitor activity"/>
    <property type="evidence" value="ECO:0007669"/>
    <property type="project" value="InterPro"/>
</dbReference>
<dbReference type="GO" id="GO:0090729">
    <property type="term" value="F:toxin activity"/>
    <property type="evidence" value="ECO:0007669"/>
    <property type="project" value="UniProtKB-KW"/>
</dbReference>
<dbReference type="CDD" id="cd22595">
    <property type="entry name" value="Kunitz_dendrotoxin"/>
    <property type="match status" value="1"/>
</dbReference>
<dbReference type="FunFam" id="4.10.410.10:FF:000004">
    <property type="entry name" value="Tissue factor pathway inhibitor"/>
    <property type="match status" value="1"/>
</dbReference>
<dbReference type="Gene3D" id="4.10.410.10">
    <property type="entry name" value="Pancreatic trypsin inhibitor Kunitz domain"/>
    <property type="match status" value="1"/>
</dbReference>
<dbReference type="InterPro" id="IPR002223">
    <property type="entry name" value="Kunitz_BPTI"/>
</dbReference>
<dbReference type="InterPro" id="IPR036880">
    <property type="entry name" value="Kunitz_BPTI_sf"/>
</dbReference>
<dbReference type="InterPro" id="IPR020901">
    <property type="entry name" value="Prtase_inh_Kunz-CS"/>
</dbReference>
<dbReference type="InterPro" id="IPR050098">
    <property type="entry name" value="TFPI/VKTCI-like"/>
</dbReference>
<dbReference type="PANTHER" id="PTHR10083:SF217">
    <property type="entry name" value="BOOPHILIN-H2"/>
    <property type="match status" value="1"/>
</dbReference>
<dbReference type="PANTHER" id="PTHR10083">
    <property type="entry name" value="KUNITZ-TYPE PROTEASE INHIBITOR-RELATED"/>
    <property type="match status" value="1"/>
</dbReference>
<dbReference type="Pfam" id="PF00014">
    <property type="entry name" value="Kunitz_BPTI"/>
    <property type="match status" value="1"/>
</dbReference>
<dbReference type="PRINTS" id="PR00759">
    <property type="entry name" value="BASICPTASE"/>
</dbReference>
<dbReference type="SMART" id="SM00131">
    <property type="entry name" value="KU"/>
    <property type="match status" value="1"/>
</dbReference>
<dbReference type="SUPFAM" id="SSF57362">
    <property type="entry name" value="BPTI-like"/>
    <property type="match status" value="1"/>
</dbReference>
<dbReference type="PROSITE" id="PS00280">
    <property type="entry name" value="BPTI_KUNITZ_1"/>
    <property type="match status" value="1"/>
</dbReference>
<dbReference type="PROSITE" id="PS50279">
    <property type="entry name" value="BPTI_KUNITZ_2"/>
    <property type="match status" value="1"/>
</dbReference>
<keyword id="KW-0903">Direct protein sequencing</keyword>
<keyword id="KW-1015">Disulfide bond</keyword>
<keyword id="KW-1213">G-protein coupled receptor impairing toxin</keyword>
<keyword id="KW-0964">Secreted</keyword>
<keyword id="KW-0800">Toxin</keyword>
<feature type="chain" id="PRO_0000457570" description="Mambaquaretin-5" evidence="3">
    <location>
        <begin position="1"/>
        <end position="57"/>
    </location>
</feature>
<feature type="domain" description="BPTI/Kunitz inhibitor" evidence="2">
    <location>
        <begin position="5"/>
        <end position="55"/>
    </location>
</feature>
<feature type="disulfide bond" evidence="1">
    <location>
        <begin position="5"/>
        <end position="55"/>
    </location>
</feature>
<feature type="disulfide bond" evidence="1">
    <location>
        <begin position="14"/>
        <end position="38"/>
    </location>
</feature>
<feature type="disulfide bond" evidence="1">
    <location>
        <begin position="30"/>
        <end position="51"/>
    </location>
</feature>
<sequence length="57" mass="6464">RPSFCNLPVKPGPCSGFFSAFYYSQKTNKCHSFTYSGCRGNGNRFRTIEECRRTCVG</sequence>
<protein>
    <recommendedName>
        <fullName evidence="4">Mambaquaretin-5</fullName>
        <shortName evidence="4">MQ5</shortName>
    </recommendedName>
    <alternativeName>
        <fullName evidence="4">Upsilon-Dj2a</fullName>
    </alternativeName>
</protein>
<organism>
    <name type="scientific">Dendroaspis jamesoni kaimosae</name>
    <name type="common">Eastern Jameson's mamba</name>
    <dbReference type="NCBI Taxonomy" id="8619"/>
    <lineage>
        <taxon>Eukaryota</taxon>
        <taxon>Metazoa</taxon>
        <taxon>Chordata</taxon>
        <taxon>Craniata</taxon>
        <taxon>Vertebrata</taxon>
        <taxon>Euteleostomi</taxon>
        <taxon>Lepidosauria</taxon>
        <taxon>Squamata</taxon>
        <taxon>Bifurcata</taxon>
        <taxon>Unidentata</taxon>
        <taxon>Episquamata</taxon>
        <taxon>Toxicofera</taxon>
        <taxon>Serpentes</taxon>
        <taxon>Colubroidea</taxon>
        <taxon>Elapidae</taxon>
        <taxon>Elapinae</taxon>
        <taxon>Dendroaspis</taxon>
    </lineage>
</organism>
<comment type="function">
    <text evidence="3">Interacts with vasopressin V2 receptor (V2R/AVPR2), probably in a selective manner (PubMed:35122240). Inhibits vasopressin binding human V2R in the nanomolar range (Ki=3.50 nM), and also potently inhibits vasopressin-induced cAMP production (IC(50)=21 nM). In vivo, intraperitoneal injection of this protein into rats increases diuresis by 6-fold, without any loss of electrolytes (PubMed:35122240).</text>
</comment>
<comment type="subcellular location">
    <subcellularLocation>
        <location evidence="3">Secreted</location>
    </subcellularLocation>
</comment>
<comment type="tissue specificity">
    <text evidence="6">Expressed by the venom gland.</text>
</comment>
<comment type="domain">
    <text evidence="1">Exploits its two major loops and engages more positions in its interaction with V2R. The pharmacophore defined by numerous amino acids positioned in loop 1 (9 to 18) and loop 2 (34, 39 and 44) may be at the origin of the absolute selectivity of this protein for V2R.</text>
</comment>
<comment type="mass spectrometry" mass="6453.95" method="MALDI" evidence="3">
    <text>Monoisotopic mass.</text>
</comment>
<comment type="similarity">
    <text evidence="5">Belongs to the venom Kunitz-type family.</text>
</comment>
<reference key="1">
    <citation type="journal article" date="2022" name="Br. J. Pharmacol.">
        <title>A new Kunitz-type snake toxin family associated with an original mode of interaction with the vasopressin 2 receptor.</title>
        <authorList>
            <person name="Droctove L."/>
            <person name="Ciolek J."/>
            <person name="Mendre C."/>
            <person name="Chorfa A."/>
            <person name="Huerta P."/>
            <person name="Carvalho C."/>
            <person name="Gouin C."/>
            <person name="Lancien M."/>
            <person name="Stanajic-Petrovic G."/>
            <person name="Braco L."/>
            <person name="Blanchet G."/>
            <person name="Upert G."/>
            <person name="De Pauw G."/>
            <person name="Barbe P."/>
            <person name="Keck M."/>
            <person name="Mourier G."/>
            <person name="Mouillac B."/>
            <person name="Denis S."/>
            <person name="Rodriguez de la Vega R.C."/>
            <person name="Quinton L."/>
            <person name="Gilles N."/>
        </authorList>
    </citation>
    <scope>PROTEIN SEQUENCE</scope>
    <scope>FUNCTION</scope>
    <scope>BIOASSAY</scope>
    <scope>SUBCELLULAR LOCATION</scope>
    <scope>MASS SPECTROMETRY</scope>
    <scope>SYNTHESIS</scope>
    <source>
        <tissue>Venom</tissue>
    </source>
</reference>
<name>MAMB5_DENJA</name>